<keyword id="KW-0511">Multifunctional enzyme</keyword>
<keyword id="KW-0596">Phosphopantetheine</keyword>
<keyword id="KW-0597">Phosphoprotein</keyword>
<keyword id="KW-0677">Repeat</keyword>
<keyword id="KW-0808">Transferase</keyword>
<keyword id="KW-0843">Virulence</keyword>
<comment type="function">
    <text evidence="1 2 9">Polyketide synthase; part of the gene cluster that mediates the biosynthesis of cercosporin, a light-activated, non-host-selective toxin (By similarity). The perylenequinone chromophore of cercosporin absorbs light energy to attain an electronically-activated triplet state and produces active oxygen species such as the hydroxyl radical, superoxide, hydrogen peroxide or singlet oxygen upon reaction with oxygen molecules (PubMed:11701851). These reactive oxygen species cause damage to various cellular components including lipids, proteins and nucleic acids (PubMed:11701851). The first step of cercosporin biosynthesis is performed by the polyketide synthase CTB1 which catalyzes the formation of nor-toralactone (By similarity). The starter unit acyltransferase (SAT) domain of CTB1 initiates polyketide extension by the selective utilization of acetyl-CoA, which is elongated to the heptaketide in the beta-ketoacyl synthase (KS) domain by successive condensations with six malonyl units introduced by the malonyl acyltransferase (MAT) domain. The product template (PT) domain catalyzes C4-C9 and C2-C11 aldol cyclizations and dehydrations to a trihydroxynaphthalene, which is thought to be delivered to the thioesterase (TE) domain for product release (By similarity). The bifunctional enzyme CTB3 then methylates nor-toralactone to toralactone before conducting an unusual oxidative aromatic ring opening (By similarity). The O-methyltransferase CTB2 further methylates the nascent OH-6 of the CBT3 product, blocking further oxidation at this site before the reductase CTB6 reduces the 2-oxopropyl ketone at position C7, giving naphthalene (By similarity). The FAD-dependent monooxygenase CTB5 in concert with the multicopper oxidase CTB12 are responsible for homodimerization of naphthalene with CTB7 installing the dioxepine moiety, finally producing cercosporin (By similarity). The fasciclin domain-containing protein CTB11 might act with CTB5 and CTB12 whereas the roles of CTB9 and CTB10 have still to be elucidated (By similarity).</text>
</comment>
<comment type="catalytic activity">
    <reaction evidence="2">
        <text>6 malonyl-CoA + acetyl-CoA + 6 H(+) = nor-toralactone + 6 CO2 + 7 CoA + 2 H2O</text>
        <dbReference type="Rhea" id="RHEA:62892"/>
        <dbReference type="ChEBI" id="CHEBI:15377"/>
        <dbReference type="ChEBI" id="CHEBI:15378"/>
        <dbReference type="ChEBI" id="CHEBI:16526"/>
        <dbReference type="ChEBI" id="CHEBI:57287"/>
        <dbReference type="ChEBI" id="CHEBI:57288"/>
        <dbReference type="ChEBI" id="CHEBI:57384"/>
        <dbReference type="ChEBI" id="CHEBI:146018"/>
    </reaction>
    <physiologicalReaction direction="left-to-right" evidence="2">
        <dbReference type="Rhea" id="RHEA:62893"/>
    </physiologicalReaction>
</comment>
<comment type="cofactor">
    <cofactor evidence="3">
        <name>pantetheine 4'-phosphate</name>
        <dbReference type="ChEBI" id="CHEBI:47942"/>
    </cofactor>
    <text evidence="3">Binds 1 phosphopantetheine covalently.</text>
</comment>
<comment type="pathway">
    <text evidence="2">Mycotoxin biosynthesis.</text>
</comment>
<comment type="domain">
    <text evidence="11">Multidomain protein; including a starter unit:ACP transacylase (SAT) that selects the starter unit; a ketosynthase (KS) that catalyzes repeated decarboxylative condensation to elongate the polyketide backbone; a malonyl-CoA:ACP transacylase (MAT) that selects and transfers the extender unit malonyl-CoA; a product template (PT) domain that controls the immediate cyclization regioselectivity of the reactive polyketide backbone; 2 acyl-carrier protein (ACP) domains that serve as the tether of the growing and completed polyketide via its phosphopantetheinyl arm; and a C-terminal thioesterase (TE) domain that facilitates the release of the final product from the enzyme.</text>
</comment>
<proteinExistence type="inferred from homology"/>
<reference key="1">
    <citation type="journal article" date="2018" name="Proc. Natl. Acad. Sci. U.S.A.">
        <title>Gene cluster conservation provides insight into cercosporin biosynthesis and extends production to the genus Colletotrichum.</title>
        <authorList>
            <person name="de Jonge R."/>
            <person name="Ebert M.K."/>
            <person name="Huitt-Roehl C.R."/>
            <person name="Pal P."/>
            <person name="Suttle J.C."/>
            <person name="Spanner R.E."/>
            <person name="Neubauer J.D."/>
            <person name="Jurick W.M. II"/>
            <person name="Stott K.A."/>
            <person name="Secor G.A."/>
            <person name="Thomma B.P.H.J."/>
            <person name="Van de Peer Y."/>
            <person name="Townsend C.A."/>
            <person name="Bolton M.D."/>
        </authorList>
    </citation>
    <scope>NUCLEOTIDE SEQUENCE [LARGE SCALE GENOMIC DNA]</scope>
    <scope>FUNCTION</scope>
    <source>
        <strain>09-40</strain>
    </source>
</reference>
<reference key="2">
    <citation type="journal article" date="2000" name="Annu. Rev. Phytopathol.">
        <title>The photoactivated cercospora toxin cercosporin: contributions to plant disease and fundamental biology.</title>
        <authorList>
            <person name="Daub M.E."/>
            <person name="Ehrenshaft M."/>
        </authorList>
    </citation>
    <scope>REVIEW ON CERCOSPORIN</scope>
</reference>
<sequence length="2204" mass="237775">MEDGAQMRVVAFGDQTYDCSEAVSQLLRVRDDAIVVDFLERATAVLKAELARLSSEQQEETPRFATLAELVPRYRAGTLNPAVSQALTCITQLGLFIRQHSSGQEAYPTANDSCITGVCTGALTAVAVGSASSVTALVPLALHTVAVAVRLGARAWEIGSCLADARRGANGRYASWTSAVGGISPQDLQDRISAYMTEQALASVSVPYLSAAVGPGQSSVSAAPVILDAFLSTLLRPLTTTRLPITAPYHAPHLFTAKDVQHVTDCLPPSDAWPTVRIPIISFSRDEAVSRGASFPAAMSEAVRDCLIRPIALDRMAVSIANHARDLGKDSVLPSPIALSFSDKLGPQVNSHLPGTKAPTPELTSTSSIPSAIGAEQQPMAKSPIAILAASGRFPQSSSMDQFWDVLINGVDTHELVPPTRWNAATHVSEDPKAKNVSGTGFGCWLHEAGEFDAAYFNMSPREAPQVDPAQRLALLTATEVLEQAGIVPNRTSSTQKNRVGVWYGATSNDWMETNSAQNVDTYFIPGGNRAFIPGRVNYFHKFSGPSYTIDTACSSSLAALHMACNALWRGEVDTAIVGGTNVLTNPDMTAGLDAGHFLSRSGNCKTFDDEADGYCRGEAVVTLILKRLPDAQADKDPIQASILGIATNHSAEAASITRPHAGAQQDLFQQVLTETGLTANDISVCEMHGTGTQAGDSGETTSVVETLAPLNRSGSAVRTTPLYIGAVKSNVGHAESAAGVSSLAKILLMLKHSKIPPHVGIKTKLNHRLPDLAARNTHIARTEVPWPRPKNGKRRVLLNNFSAAGGNTCLVLEDAPEPEDSQEVDPREHHIVALSAKTPDSMVNNLTNMITWIDKHSGDSIATLPQLSYTTTARRVHHRHRAVATGTDLLQIRSSLQEQLDRRVSGERSIPHPPNGPSFVLAFTGQGSAFEGMGVDLYKRFASFRSDIARYDQICEGMSLPSIKAMFEDEKVFSTASPTLQQLTHVCFQMALYRLWKSLGVQAKAVVGHSLGEYAALYAAGVLSQSDTLYLVGRRAQLMEKHLSQGTHAMLAVRAKEEAIVAAIDGPPGEAYEFSCRNGEQRNVLGGTVAQIQAAKAALEAKKIRCQYLDTPMAFHTGQVDPILPELLQVAAACSIQDPQIPVISPAYGKVIRSAKDFQPEYFTHHCRSSVNMVDALQSAVEEGLLDKNIIGLEIGPGPVVTQFVKEAVGTTMQTFASINKDKDTWQLITQALAKFYLAGASIEWSRYHEDFPGAQKVLELPAYGWTLKNYWLQYVNDWSLRKGDPAVVVAASNLELSSSIHKVITNTITANSDGELVVDADLSREDLHPMVQGHQVYGVPLCTPSVYADIALTLGEYIRQVIKPGEVAQTSVEVAEMNIQSALVANNTGRVQLLRTYAKFDPKAQVASCTFSSIKEDGSSVVEQHANCKIRFGSLEKEKTALESAALAAQARMAALKTQVGQDDNTYRFSKGMIYKMIGQLADFDEKYRGLCAITLDNDAMEASGKVSFKGIPNEGKFHSSPAYLDALSQLGGFVMNANEGVDLEKEVFVNHGWGSMRFFAALDPAMTYYTHVKMTQGKDKLWTGDVLIFDDKQALIGIVGGVALQGVPKRLMHYIVTAANKKASGPPTEKKGSSPPVEKKASAPVAPTRPAIQRKNASIPPPATQVTPQNKTIKTPSVSALIAPALEIVSEEIGMPIDELKDDIDFTDAGLDSLLSLVISSRMRDQLGIEFESAQFMEIGSIGGLKEFLTRLSPPVAVAVATAVEIVKEEALTSLEELTDPSPNEIGTVWRDALKILSEESGLTDEELTDDTSFADVGVDSLMSLVITSRLRDELDIDFPDRALFEECQTIFDLRKRFSGSTESFDSTTTKPSAGDATPPLTDSSASSPPSSEFDGETPMTDLDEVFDSPPAQKRIPSPPKGRIPPAWSMYLQGSQKRSKEILFLFPDGAGAATSYLSLPRLGEDIGVVAFNSPFMKTPHKFVDHTLPDVIASYVEGIRGRQAQGPYHLGGWSAGGILAYAVAQELIAAGEEVSTLLLIDSPSPTKGLDRLPTRFFDHCTNVGLFGTELSRGSGGPNKTPEWLMPHFRASIELLHDYHAPPMKLGNKTKVMVIWAGECAFDGVRYAHIPPSAGDTDEDTEGMKFLTEKRKDFGATEWASLFPGTDVDARVVESEHHFSMMRDSGAQMLVEHMRDGLGIVSS</sequence>
<organism>
    <name type="scientific">Cercospora beticola</name>
    <name type="common">Sugarbeet leaf spot fungus</name>
    <dbReference type="NCBI Taxonomy" id="122368"/>
    <lineage>
        <taxon>Eukaryota</taxon>
        <taxon>Fungi</taxon>
        <taxon>Dikarya</taxon>
        <taxon>Ascomycota</taxon>
        <taxon>Pezizomycotina</taxon>
        <taxon>Dothideomycetes</taxon>
        <taxon>Dothideomycetidae</taxon>
        <taxon>Mycosphaerellales</taxon>
        <taxon>Mycosphaerellaceae</taxon>
        <taxon>Cercospora</taxon>
    </lineage>
</organism>
<evidence type="ECO:0000250" key="1">
    <source>
        <dbReference type="UniProtKB" id="Q0UHZ9"/>
    </source>
</evidence>
<evidence type="ECO:0000250" key="2">
    <source>
        <dbReference type="UniProtKB" id="Q6DQW3"/>
    </source>
</evidence>
<evidence type="ECO:0000250" key="3">
    <source>
        <dbReference type="UniProtKB" id="Q9Y8A5"/>
    </source>
</evidence>
<evidence type="ECO:0000255" key="4"/>
<evidence type="ECO:0000255" key="5">
    <source>
        <dbReference type="PROSITE-ProRule" id="PRU00258"/>
    </source>
</evidence>
<evidence type="ECO:0000255" key="6">
    <source>
        <dbReference type="PROSITE-ProRule" id="PRU01348"/>
    </source>
</evidence>
<evidence type="ECO:0000255" key="7">
    <source>
        <dbReference type="PROSITE-ProRule" id="PRU01363"/>
    </source>
</evidence>
<evidence type="ECO:0000256" key="8">
    <source>
        <dbReference type="SAM" id="MobiDB-lite"/>
    </source>
</evidence>
<evidence type="ECO:0000303" key="9">
    <source>
    </source>
</evidence>
<evidence type="ECO:0000303" key="10">
    <source>
    </source>
</evidence>
<evidence type="ECO:0000305" key="11"/>
<accession>A0A2G5IC96</accession>
<dbReference type="EC" id="2.3.1.-" evidence="2"/>
<dbReference type="EMBL" id="LKMD01000100">
    <property type="protein sequence ID" value="PIB02405.1"/>
    <property type="molecule type" value="Genomic_DNA"/>
</dbReference>
<dbReference type="RefSeq" id="XP_023460065.1">
    <property type="nucleotide sequence ID" value="XM_023593475.1"/>
</dbReference>
<dbReference type="SMR" id="A0A2G5IC96"/>
<dbReference type="ESTHER" id="cernc-q6dqw3">
    <property type="family name" value="Thioesterase"/>
</dbReference>
<dbReference type="GeneID" id="35424645"/>
<dbReference type="OrthoDB" id="329835at2759"/>
<dbReference type="Proteomes" id="UP000230605">
    <property type="component" value="Chromosome 1"/>
</dbReference>
<dbReference type="GO" id="GO:0004315">
    <property type="term" value="F:3-oxoacyl-[acyl-carrier-protein] synthase activity"/>
    <property type="evidence" value="ECO:0007669"/>
    <property type="project" value="InterPro"/>
</dbReference>
<dbReference type="GO" id="GO:0004312">
    <property type="term" value="F:fatty acid synthase activity"/>
    <property type="evidence" value="ECO:0007669"/>
    <property type="project" value="TreeGrafter"/>
</dbReference>
<dbReference type="GO" id="GO:0031177">
    <property type="term" value="F:phosphopantetheine binding"/>
    <property type="evidence" value="ECO:0007669"/>
    <property type="project" value="InterPro"/>
</dbReference>
<dbReference type="GO" id="GO:0006633">
    <property type="term" value="P:fatty acid biosynthetic process"/>
    <property type="evidence" value="ECO:0007669"/>
    <property type="project" value="InterPro"/>
</dbReference>
<dbReference type="GO" id="GO:0044550">
    <property type="term" value="P:secondary metabolite biosynthetic process"/>
    <property type="evidence" value="ECO:0007669"/>
    <property type="project" value="TreeGrafter"/>
</dbReference>
<dbReference type="CDD" id="cd00833">
    <property type="entry name" value="PKS"/>
    <property type="match status" value="1"/>
</dbReference>
<dbReference type="FunFam" id="1.10.1200.10:FF:000011">
    <property type="entry name" value="Sterigmatocystin biosynthesis polyketide synthase"/>
    <property type="match status" value="1"/>
</dbReference>
<dbReference type="Gene3D" id="3.30.70.3290">
    <property type="match status" value="1"/>
</dbReference>
<dbReference type="Gene3D" id="3.40.47.10">
    <property type="match status" value="1"/>
</dbReference>
<dbReference type="Gene3D" id="1.10.1200.10">
    <property type="entry name" value="ACP-like"/>
    <property type="match status" value="2"/>
</dbReference>
<dbReference type="Gene3D" id="3.40.50.1820">
    <property type="entry name" value="alpha/beta hydrolase"/>
    <property type="match status" value="1"/>
</dbReference>
<dbReference type="Gene3D" id="3.40.366.10">
    <property type="entry name" value="Malonyl-Coenzyme A Acyl Carrier Protein, domain 2"/>
    <property type="match status" value="2"/>
</dbReference>
<dbReference type="Gene3D" id="3.10.129.110">
    <property type="entry name" value="Polyketide synthase dehydratase"/>
    <property type="match status" value="1"/>
</dbReference>
<dbReference type="InterPro" id="IPR029058">
    <property type="entry name" value="AB_hydrolase_fold"/>
</dbReference>
<dbReference type="InterPro" id="IPR001227">
    <property type="entry name" value="Ac_transferase_dom_sf"/>
</dbReference>
<dbReference type="InterPro" id="IPR036736">
    <property type="entry name" value="ACP-like_sf"/>
</dbReference>
<dbReference type="InterPro" id="IPR014043">
    <property type="entry name" value="Acyl_transferase_dom"/>
</dbReference>
<dbReference type="InterPro" id="IPR016035">
    <property type="entry name" value="Acyl_Trfase/lysoPLipase"/>
</dbReference>
<dbReference type="InterPro" id="IPR018201">
    <property type="entry name" value="Ketoacyl_synth_AS"/>
</dbReference>
<dbReference type="InterPro" id="IPR014031">
    <property type="entry name" value="Ketoacyl_synth_C"/>
</dbReference>
<dbReference type="InterPro" id="IPR014030">
    <property type="entry name" value="Ketoacyl_synth_N"/>
</dbReference>
<dbReference type="InterPro" id="IPR020841">
    <property type="entry name" value="PKS_Beta-ketoAc_synthase_dom"/>
</dbReference>
<dbReference type="InterPro" id="IPR042104">
    <property type="entry name" value="PKS_dehydratase_sf"/>
</dbReference>
<dbReference type="InterPro" id="IPR049900">
    <property type="entry name" value="PKS_mFAS_DH"/>
</dbReference>
<dbReference type="InterPro" id="IPR050091">
    <property type="entry name" value="PKS_NRPS_Biosynth_Enz"/>
</dbReference>
<dbReference type="InterPro" id="IPR020806">
    <property type="entry name" value="PKS_PP-bd"/>
</dbReference>
<dbReference type="InterPro" id="IPR020802">
    <property type="entry name" value="PKS_thioesterase"/>
</dbReference>
<dbReference type="InterPro" id="IPR009081">
    <property type="entry name" value="PP-bd_ACP"/>
</dbReference>
<dbReference type="InterPro" id="IPR030918">
    <property type="entry name" value="PT_fungal_PKS"/>
</dbReference>
<dbReference type="InterPro" id="IPR032088">
    <property type="entry name" value="SAT"/>
</dbReference>
<dbReference type="InterPro" id="IPR001031">
    <property type="entry name" value="Thioesterase"/>
</dbReference>
<dbReference type="InterPro" id="IPR016039">
    <property type="entry name" value="Thiolase-like"/>
</dbReference>
<dbReference type="NCBIfam" id="TIGR04532">
    <property type="entry name" value="PT_fungal_PKS"/>
    <property type="match status" value="1"/>
</dbReference>
<dbReference type="PANTHER" id="PTHR43775">
    <property type="entry name" value="FATTY ACID SYNTHASE"/>
    <property type="match status" value="1"/>
</dbReference>
<dbReference type="PANTHER" id="PTHR43775:SF40">
    <property type="entry name" value="NORSOLORINIC ACID SYNTHASE STCA"/>
    <property type="match status" value="1"/>
</dbReference>
<dbReference type="Pfam" id="PF00698">
    <property type="entry name" value="Acyl_transf_1"/>
    <property type="match status" value="1"/>
</dbReference>
<dbReference type="Pfam" id="PF00109">
    <property type="entry name" value="ketoacyl-synt"/>
    <property type="match status" value="1"/>
</dbReference>
<dbReference type="Pfam" id="PF02801">
    <property type="entry name" value="Ketoacyl-synt_C"/>
    <property type="match status" value="1"/>
</dbReference>
<dbReference type="Pfam" id="PF00550">
    <property type="entry name" value="PP-binding"/>
    <property type="match status" value="2"/>
</dbReference>
<dbReference type="Pfam" id="PF16073">
    <property type="entry name" value="SAT"/>
    <property type="match status" value="1"/>
</dbReference>
<dbReference type="Pfam" id="PF00975">
    <property type="entry name" value="Thioesterase"/>
    <property type="match status" value="1"/>
</dbReference>
<dbReference type="SMART" id="SM00827">
    <property type="entry name" value="PKS_AT"/>
    <property type="match status" value="1"/>
</dbReference>
<dbReference type="SMART" id="SM00825">
    <property type="entry name" value="PKS_KS"/>
    <property type="match status" value="1"/>
</dbReference>
<dbReference type="SMART" id="SM00823">
    <property type="entry name" value="PKS_PP"/>
    <property type="match status" value="2"/>
</dbReference>
<dbReference type="SMART" id="SM00824">
    <property type="entry name" value="PKS_TE"/>
    <property type="match status" value="1"/>
</dbReference>
<dbReference type="SUPFAM" id="SSF47336">
    <property type="entry name" value="ACP-like"/>
    <property type="match status" value="2"/>
</dbReference>
<dbReference type="SUPFAM" id="SSF53474">
    <property type="entry name" value="alpha/beta-Hydrolases"/>
    <property type="match status" value="1"/>
</dbReference>
<dbReference type="SUPFAM" id="SSF52151">
    <property type="entry name" value="FabD/lysophospholipase-like"/>
    <property type="match status" value="1"/>
</dbReference>
<dbReference type="SUPFAM" id="SSF53901">
    <property type="entry name" value="Thiolase-like"/>
    <property type="match status" value="1"/>
</dbReference>
<dbReference type="PROSITE" id="PS50075">
    <property type="entry name" value="CARRIER"/>
    <property type="match status" value="2"/>
</dbReference>
<dbReference type="PROSITE" id="PS00606">
    <property type="entry name" value="KS3_1"/>
    <property type="match status" value="1"/>
</dbReference>
<dbReference type="PROSITE" id="PS52004">
    <property type="entry name" value="KS3_2"/>
    <property type="match status" value="1"/>
</dbReference>
<dbReference type="PROSITE" id="PS52019">
    <property type="entry name" value="PKS_MFAS_DH"/>
    <property type="match status" value="1"/>
</dbReference>
<protein>
    <recommendedName>
        <fullName evidence="10">Non-reducing polyketide synthase CTB1</fullName>
        <ecNumber evidence="2">2.3.1.-</ecNumber>
    </recommendedName>
    <alternativeName>
        <fullName evidence="10">Cercosporin toxin biosynthesis cluster protein 1</fullName>
    </alternativeName>
</protein>
<name>CTB1_CERBT</name>
<gene>
    <name evidence="10" type="primary">CTB1</name>
    <name type="ORF">CB0940_00833</name>
</gene>
<feature type="chain" id="PRO_0000449848" description="Non-reducing polyketide synthase CTB1">
    <location>
        <begin position="1"/>
        <end position="2204"/>
    </location>
</feature>
<feature type="domain" description="Ketosynthase family 3 (KS3)" evidence="6">
    <location>
        <begin position="382"/>
        <end position="815"/>
    </location>
</feature>
<feature type="domain" description="PKS/mFAS DH" evidence="7">
    <location>
        <begin position="1303"/>
        <end position="1616"/>
    </location>
</feature>
<feature type="domain" description="Carrier 1" evidence="5">
    <location>
        <begin position="1679"/>
        <end position="1756"/>
    </location>
</feature>
<feature type="domain" description="Carrier 2" evidence="5">
    <location>
        <begin position="1783"/>
        <end position="1865"/>
    </location>
</feature>
<feature type="region of interest" description="N-terminal acylcarrier protein transacylase domain (SAT)" evidence="2 4">
    <location>
        <begin position="11"/>
        <end position="250"/>
    </location>
</feature>
<feature type="region of interest" description="Malonyl-CoA:ACP transacylase (MAT) domain" evidence="2 4">
    <location>
        <begin position="923"/>
        <end position="1224"/>
    </location>
</feature>
<feature type="region of interest" description="Product template (PT) domain" evidence="2 4">
    <location>
        <begin position="1299"/>
        <end position="1619"/>
    </location>
</feature>
<feature type="region of interest" description="N-terminal hotdog fold" evidence="7">
    <location>
        <begin position="1303"/>
        <end position="1439"/>
    </location>
</feature>
<feature type="region of interest" description="C-terminal hotdog fold" evidence="7">
    <location>
        <begin position="1468"/>
        <end position="1616"/>
    </location>
</feature>
<feature type="region of interest" description="Disordered" evidence="8">
    <location>
        <begin position="1625"/>
        <end position="1674"/>
    </location>
</feature>
<feature type="region of interest" description="Disordered" evidence="8">
    <location>
        <begin position="1864"/>
        <end position="1931"/>
    </location>
</feature>
<feature type="region of interest" description="Thioesterase (TE) domain" evidence="2 4">
    <location>
        <begin position="1945"/>
        <end position="2195"/>
    </location>
</feature>
<feature type="compositionally biased region" description="Basic and acidic residues" evidence="8">
    <location>
        <begin position="1631"/>
        <end position="1644"/>
    </location>
</feature>
<feature type="compositionally biased region" description="Polar residues" evidence="8">
    <location>
        <begin position="1864"/>
        <end position="1875"/>
    </location>
</feature>
<feature type="compositionally biased region" description="Low complexity" evidence="8">
    <location>
        <begin position="1880"/>
        <end position="1895"/>
    </location>
</feature>
<feature type="active site" description="For beta-ketoacyl synthase activity" evidence="6">
    <location>
        <position position="554"/>
    </location>
</feature>
<feature type="active site" description="For beta-ketoacyl synthase activity" evidence="6">
    <location>
        <position position="689"/>
    </location>
</feature>
<feature type="active site" description="For beta-ketoacyl synthase activity" evidence="6">
    <location>
        <position position="734"/>
    </location>
</feature>
<feature type="active site" description="Proton acceptor; for dehydratase activity" evidence="7">
    <location>
        <position position="1336"/>
    </location>
</feature>
<feature type="active site" description="Proton donor; for dehydratase activity" evidence="7">
    <location>
        <position position="1528"/>
    </location>
</feature>
<feature type="modified residue" description="O-(pantetheine 4'-phosphoryl)serine" evidence="5">
    <location>
        <position position="1716"/>
    </location>
</feature>
<feature type="modified residue" description="O-(pantetheine 4'-phosphoryl)serine" evidence="5">
    <location>
        <position position="1824"/>
    </location>
</feature>